<keyword id="KW-1185">Reference proteome</keyword>
<keyword id="KW-1277">Toxin-antitoxin system</keyword>
<dbReference type="EMBL" id="AE000516">
    <property type="protein sequence ID" value="AAK46285.1"/>
    <property type="molecule type" value="Genomic_DNA"/>
</dbReference>
<dbReference type="RefSeq" id="WP_003899100.1">
    <property type="nucleotide sequence ID" value="NZ_KK341227.1"/>
</dbReference>
<dbReference type="SMR" id="P9WF16"/>
<dbReference type="KEGG" id="mtc:MT2013"/>
<dbReference type="PATRIC" id="fig|83331.31.peg.2168"/>
<dbReference type="HOGENOM" id="CLU_163140_2_2_11"/>
<dbReference type="Proteomes" id="UP000001020">
    <property type="component" value="Chromosome"/>
</dbReference>
<dbReference type="GO" id="GO:0097351">
    <property type="term" value="F:toxin sequestering activity"/>
    <property type="evidence" value="ECO:0007669"/>
    <property type="project" value="TreeGrafter"/>
</dbReference>
<dbReference type="Gene3D" id="3.40.1620.10">
    <property type="entry name" value="YefM-like domain"/>
    <property type="match status" value="1"/>
</dbReference>
<dbReference type="InterPro" id="IPR051416">
    <property type="entry name" value="phD-YefM_TA_antitoxins"/>
</dbReference>
<dbReference type="InterPro" id="IPR036165">
    <property type="entry name" value="YefM-like_sf"/>
</dbReference>
<dbReference type="NCBIfam" id="TIGR01552">
    <property type="entry name" value="phd_fam"/>
    <property type="match status" value="1"/>
</dbReference>
<dbReference type="PANTHER" id="PTHR35377:SF5">
    <property type="entry name" value="ANTITOXIN VAPB46"/>
    <property type="match status" value="1"/>
</dbReference>
<dbReference type="PANTHER" id="PTHR35377">
    <property type="entry name" value="ANTITOXIN VAPB49-RELATED-RELATED"/>
    <property type="match status" value="1"/>
</dbReference>
<dbReference type="SUPFAM" id="SSF143120">
    <property type="entry name" value="YefM-like"/>
    <property type="match status" value="1"/>
</dbReference>
<proteinExistence type="inferred from homology"/>
<sequence length="90" mass="9818">MNEVSIRTLNQETSKVLARVKRGEEINLTERGKVIARIIPASAGPLDSLISTGSVQPARVHGPAPRPTIPMRGGLDSGTLLERMRAEERY</sequence>
<feature type="chain" id="PRO_0000428617" description="Antitoxin VapB35">
    <location>
        <begin position="1"/>
        <end position="90"/>
    </location>
</feature>
<feature type="region of interest" description="Disordered" evidence="2">
    <location>
        <begin position="53"/>
        <end position="90"/>
    </location>
</feature>
<accession>P9WF16</accession>
<accession>F2GGQ3</accession>
<accession>P0CW28</accession>
<accession>Q8VJT6</accession>
<protein>
    <recommendedName>
        <fullName>Antitoxin VapB35</fullName>
    </recommendedName>
</protein>
<evidence type="ECO:0000250" key="1"/>
<evidence type="ECO:0000256" key="2">
    <source>
        <dbReference type="SAM" id="MobiDB-lite"/>
    </source>
</evidence>
<evidence type="ECO:0000305" key="3"/>
<gene>
    <name type="primary">vapB35</name>
    <name type="ordered locus">MT2013</name>
</gene>
<comment type="function">
    <text evidence="1">Antitoxin component of a type II toxin-antitoxin (TA) system. Neutralizes the effect of cognate toxin VapC35 (By similarity).</text>
</comment>
<comment type="similarity">
    <text evidence="3">Belongs to the phD/YefM antitoxin family.</text>
</comment>
<organism>
    <name type="scientific">Mycobacterium tuberculosis (strain CDC 1551 / Oshkosh)</name>
    <dbReference type="NCBI Taxonomy" id="83331"/>
    <lineage>
        <taxon>Bacteria</taxon>
        <taxon>Bacillati</taxon>
        <taxon>Actinomycetota</taxon>
        <taxon>Actinomycetes</taxon>
        <taxon>Mycobacteriales</taxon>
        <taxon>Mycobacteriaceae</taxon>
        <taxon>Mycobacterium</taxon>
        <taxon>Mycobacterium tuberculosis complex</taxon>
    </lineage>
</organism>
<reference key="1">
    <citation type="journal article" date="2002" name="J. Bacteriol.">
        <title>Whole-genome comparison of Mycobacterium tuberculosis clinical and laboratory strains.</title>
        <authorList>
            <person name="Fleischmann R.D."/>
            <person name="Alland D."/>
            <person name="Eisen J.A."/>
            <person name="Carpenter L."/>
            <person name="White O."/>
            <person name="Peterson J.D."/>
            <person name="DeBoy R.T."/>
            <person name="Dodson R.J."/>
            <person name="Gwinn M.L."/>
            <person name="Haft D.H."/>
            <person name="Hickey E.K."/>
            <person name="Kolonay J.F."/>
            <person name="Nelson W.C."/>
            <person name="Umayam L.A."/>
            <person name="Ermolaeva M.D."/>
            <person name="Salzberg S.L."/>
            <person name="Delcher A."/>
            <person name="Utterback T.R."/>
            <person name="Weidman J.F."/>
            <person name="Khouri H.M."/>
            <person name="Gill J."/>
            <person name="Mikula A."/>
            <person name="Bishai W."/>
            <person name="Jacobs W.R. Jr."/>
            <person name="Venter J.C."/>
            <person name="Fraser C.M."/>
        </authorList>
    </citation>
    <scope>NUCLEOTIDE SEQUENCE [LARGE SCALE GENOMIC DNA]</scope>
    <source>
        <strain>CDC 1551 / Oshkosh</strain>
    </source>
</reference>
<name>VPB35_MYCTO</name>